<accession>Q93ZC9</accession>
<accession>Q9SS91</accession>
<evidence type="ECO:0000250" key="1"/>
<evidence type="ECO:0000255" key="2"/>
<evidence type="ECO:0000269" key="3">
    <source>
    </source>
</evidence>
<evidence type="ECO:0000305" key="4"/>
<comment type="function">
    <text evidence="3">Sugar-1-kinase with a strict substrate specificity for D-glucuronic acid and ATP. Involved in the biosynthesis of UDP-glucuronic acid (UDP-GlcA), providing nucleotide sugars for cell-wall polymers. May be also involved in a salvage pathway for glucuronic acid.</text>
</comment>
<comment type="catalytic activity">
    <reaction evidence="3">
        <text>D-glucuronate + ATP = 1-phospho-alpha-D-glucuronate + ADP + H(+)</text>
        <dbReference type="Rhea" id="RHEA:17005"/>
        <dbReference type="ChEBI" id="CHEBI:15378"/>
        <dbReference type="ChEBI" id="CHEBI:30616"/>
        <dbReference type="ChEBI" id="CHEBI:57897"/>
        <dbReference type="ChEBI" id="CHEBI:58720"/>
        <dbReference type="ChEBI" id="CHEBI:456216"/>
        <dbReference type="EC" id="2.7.1.43"/>
    </reaction>
</comment>
<comment type="cofactor">
    <cofactor evidence="3">
        <name>Mg(2+)</name>
        <dbReference type="ChEBI" id="CHEBI:18420"/>
    </cofactor>
    <cofactor evidence="3">
        <name>Mn(2+)</name>
        <dbReference type="ChEBI" id="CHEBI:29035"/>
    </cofactor>
    <cofactor evidence="3">
        <name>Co(2+)</name>
        <dbReference type="ChEBI" id="CHEBI:48828"/>
    </cofactor>
    <text evidence="3">Magnesium. Can also use other divalent cations like manganese or cobalt.</text>
</comment>
<comment type="biophysicochemical properties">
    <kinetics>
        <KM evidence="3">697 uM for D-glucuronic acid</KM>
        <KM evidence="3">555 uM for ATP</KM>
        <Vmax evidence="3">12.2 nmol/min/ug enzyme toward D-glucuronic acid</Vmax>
        <Vmax evidence="3">12.6 nmol/min/ug enzyme toward ATP</Vmax>
    </kinetics>
    <phDependence>
        <text evidence="3">Optimum pH is 7.5.</text>
    </phDependence>
    <temperatureDependence>
        <text evidence="3">Optimum temperature is 35 degrees Celsius.</text>
    </temperatureDependence>
</comment>
<comment type="tissue specificity">
    <text evidence="3">Highly expressed in pollen. Detected in seedlings, inflorescences, seeds, leaves and roots.</text>
</comment>
<comment type="similarity">
    <text evidence="4">Belongs to the GHMP kinase family.</text>
</comment>
<comment type="sequence caution" evidence="4">
    <conflict type="erroneous gene model prediction">
        <sequence resource="EMBL-CDS" id="AAF01548"/>
    </conflict>
</comment>
<dbReference type="EC" id="2.7.1.43"/>
<dbReference type="EMBL" id="GU599900">
    <property type="protein sequence ID" value="ADD92391.1"/>
    <property type="molecule type" value="mRNA"/>
</dbReference>
<dbReference type="EMBL" id="AC009325">
    <property type="protein sequence ID" value="AAF01548.1"/>
    <property type="status" value="ALT_SEQ"/>
    <property type="molecule type" value="Genomic_DNA"/>
</dbReference>
<dbReference type="EMBL" id="CP002686">
    <property type="protein sequence ID" value="AEE73698.1"/>
    <property type="molecule type" value="Genomic_DNA"/>
</dbReference>
<dbReference type="EMBL" id="AY057630">
    <property type="protein sequence ID" value="AAL15261.1"/>
    <property type="molecule type" value="mRNA"/>
</dbReference>
<dbReference type="EMBL" id="AY141995">
    <property type="protein sequence ID" value="AAM98259.1"/>
    <property type="molecule type" value="mRNA"/>
</dbReference>
<dbReference type="SMR" id="Q93ZC9"/>
<dbReference type="FunCoup" id="Q93ZC9">
    <property type="interactions" value="351"/>
</dbReference>
<dbReference type="STRING" id="3702.Q93ZC9"/>
<dbReference type="PaxDb" id="3702-AT3G01640.1"/>
<dbReference type="ProteomicsDB" id="220770"/>
<dbReference type="DNASU" id="819902"/>
<dbReference type="EnsemblPlants" id="AT3G01640.1">
    <property type="protein sequence ID" value="AT3G01640.1"/>
    <property type="gene ID" value="AT3G01640"/>
</dbReference>
<dbReference type="GeneID" id="819902"/>
<dbReference type="Gramene" id="AT3G01640.1">
    <property type="protein sequence ID" value="AT3G01640.1"/>
    <property type="gene ID" value="AT3G01640"/>
</dbReference>
<dbReference type="KEGG" id="ath:AT3G01640"/>
<dbReference type="Araport" id="AT3G01640"/>
<dbReference type="TAIR" id="AT3G01640">
    <property type="gene designation" value="GLCAK"/>
</dbReference>
<dbReference type="eggNOG" id="ENOG502QPXH">
    <property type="taxonomic scope" value="Eukaryota"/>
</dbReference>
<dbReference type="HOGENOM" id="CLU_050132_0_0_1"/>
<dbReference type="InParanoid" id="Q93ZC9"/>
<dbReference type="PhylomeDB" id="Q93ZC9"/>
<dbReference type="BioCyc" id="MetaCyc:AT3G01640-MONOMER"/>
<dbReference type="BRENDA" id="2.7.1.43">
    <property type="organism ID" value="399"/>
</dbReference>
<dbReference type="SABIO-RK" id="Q93ZC9"/>
<dbReference type="PRO" id="PR:Q93ZC9"/>
<dbReference type="Proteomes" id="UP000006548">
    <property type="component" value="Chromosome 3"/>
</dbReference>
<dbReference type="ExpressionAtlas" id="Q93ZC9">
    <property type="expression patterns" value="baseline and differential"/>
</dbReference>
<dbReference type="GO" id="GO:0005524">
    <property type="term" value="F:ATP binding"/>
    <property type="evidence" value="ECO:0007669"/>
    <property type="project" value="UniProtKB-KW"/>
</dbReference>
<dbReference type="GO" id="GO:0047940">
    <property type="term" value="F:glucuronokinase activity"/>
    <property type="evidence" value="ECO:0000314"/>
    <property type="project" value="TAIR"/>
</dbReference>
<dbReference type="GO" id="GO:0046872">
    <property type="term" value="F:metal ion binding"/>
    <property type="evidence" value="ECO:0007669"/>
    <property type="project" value="UniProtKB-KW"/>
</dbReference>
<dbReference type="GO" id="GO:0008266">
    <property type="term" value="F:poly(U) RNA binding"/>
    <property type="evidence" value="ECO:0000314"/>
    <property type="project" value="TAIR"/>
</dbReference>
<dbReference type="GO" id="GO:0042546">
    <property type="term" value="P:cell wall biogenesis"/>
    <property type="evidence" value="ECO:0000304"/>
    <property type="project" value="TAIR"/>
</dbReference>
<dbReference type="GO" id="GO:0006020">
    <property type="term" value="P:inositol metabolic process"/>
    <property type="evidence" value="ECO:0000304"/>
    <property type="project" value="TAIR"/>
</dbReference>
<dbReference type="GO" id="GO:0048868">
    <property type="term" value="P:pollen tube development"/>
    <property type="evidence" value="ECO:0000304"/>
    <property type="project" value="TAIR"/>
</dbReference>
<dbReference type="FunFam" id="3.30.230.120:FF:000003">
    <property type="entry name" value="Probable glucuronokinase 2"/>
    <property type="match status" value="1"/>
</dbReference>
<dbReference type="Gene3D" id="3.30.230.120">
    <property type="match status" value="1"/>
</dbReference>
<dbReference type="InterPro" id="IPR013750">
    <property type="entry name" value="GHMP_kinase_C_dom"/>
</dbReference>
<dbReference type="InterPro" id="IPR036554">
    <property type="entry name" value="GHMP_kinase_C_sf"/>
</dbReference>
<dbReference type="InterPro" id="IPR006204">
    <property type="entry name" value="GHMP_kinase_N_dom"/>
</dbReference>
<dbReference type="InterPro" id="IPR053034">
    <property type="entry name" value="Glucuronokinase-like"/>
</dbReference>
<dbReference type="InterPro" id="IPR020568">
    <property type="entry name" value="Ribosomal_Su5_D2-typ_SF"/>
</dbReference>
<dbReference type="PANTHER" id="PTHR38710">
    <property type="entry name" value="WITH PUTATIVE URIDYL PYROPHOSPHORYLASE-RELATED"/>
    <property type="match status" value="1"/>
</dbReference>
<dbReference type="PANTHER" id="PTHR38710:SF1">
    <property type="entry name" value="WITH PUTATIVE URIDYL PYROPHOSPHORYLASE-RELATED"/>
    <property type="match status" value="1"/>
</dbReference>
<dbReference type="Pfam" id="PF08544">
    <property type="entry name" value="GHMP_kinases_C"/>
    <property type="match status" value="1"/>
</dbReference>
<dbReference type="Pfam" id="PF00288">
    <property type="entry name" value="GHMP_kinases_N"/>
    <property type="match status" value="1"/>
</dbReference>
<dbReference type="PRINTS" id="PR00959">
    <property type="entry name" value="MEVGALKINASE"/>
</dbReference>
<dbReference type="SUPFAM" id="SSF55060">
    <property type="entry name" value="GHMP Kinase, C-terminal domain"/>
    <property type="match status" value="1"/>
</dbReference>
<dbReference type="SUPFAM" id="SSF54211">
    <property type="entry name" value="Ribosomal protein S5 domain 2-like"/>
    <property type="match status" value="1"/>
</dbReference>
<protein>
    <recommendedName>
        <fullName>Glucuronokinase 1</fullName>
        <shortName>AtGlcAK1</shortName>
        <ecNumber>2.7.1.43</ecNumber>
    </recommendedName>
</protein>
<feature type="chain" id="PRO_0000407401" description="Glucuronokinase 1">
    <location>
        <begin position="1"/>
        <end position="362"/>
    </location>
</feature>
<feature type="active site" description="Proton acceptor" evidence="1">
    <location>
        <position position="179"/>
    </location>
</feature>
<feature type="binding site" evidence="2">
    <location>
        <begin position="126"/>
        <end position="136"/>
    </location>
    <ligand>
        <name>ATP</name>
        <dbReference type="ChEBI" id="CHEBI:30616"/>
    </ligand>
</feature>
<feature type="site" description="Transition state stabilizer" evidence="1">
    <location>
        <position position="24"/>
    </location>
</feature>
<sequence>MDPNSTVSGDGQATAAIEHRSFARIGFLGNPSDVYFGRTISLTIGNFWASVKLEPSEHLVIKPHPFHDLVQFTSLDHLLNRLQNEGYYGGVRLLMAICKVFRNYCKENDIQLHQANFSLSYDTNIPRQTGLSGSSAIVSAALNCLLDFYNVRHLIKVQVRPNIVLSAEKELGIVAGLQDRVAQVYGGLVHMDFSKEHMDKLGHGIYTPMDISLLPPLHLIYAENPSDSGKVHSMVRQRWLDGDEFIISSMKEVGSLAEEGRTALLNKDHSKLVELMNLNFDIRRRMFGDECLGAMNIEMVEVARRVGAASKFTGSGGAVVVFCPEGPSQVKLLEEECRKAGFTLQPVKIAPSCLNDSDIQTL</sequence>
<gene>
    <name type="primary">GLCAK1</name>
    <name type="ordered locus">At3g01640</name>
    <name type="ORF">F4P13.18</name>
</gene>
<name>GLAK1_ARATH</name>
<keyword id="KW-0067">ATP-binding</keyword>
<keyword id="KW-0119">Carbohydrate metabolism</keyword>
<keyword id="KW-0170">Cobalt</keyword>
<keyword id="KW-0418">Kinase</keyword>
<keyword id="KW-0460">Magnesium</keyword>
<keyword id="KW-0464">Manganese</keyword>
<keyword id="KW-0479">Metal-binding</keyword>
<keyword id="KW-0547">Nucleotide-binding</keyword>
<keyword id="KW-1185">Reference proteome</keyword>
<keyword id="KW-0808">Transferase</keyword>
<proteinExistence type="evidence at protein level"/>
<organism>
    <name type="scientific">Arabidopsis thaliana</name>
    <name type="common">Mouse-ear cress</name>
    <dbReference type="NCBI Taxonomy" id="3702"/>
    <lineage>
        <taxon>Eukaryota</taxon>
        <taxon>Viridiplantae</taxon>
        <taxon>Streptophyta</taxon>
        <taxon>Embryophyta</taxon>
        <taxon>Tracheophyta</taxon>
        <taxon>Spermatophyta</taxon>
        <taxon>Magnoliopsida</taxon>
        <taxon>eudicotyledons</taxon>
        <taxon>Gunneridae</taxon>
        <taxon>Pentapetalae</taxon>
        <taxon>rosids</taxon>
        <taxon>malvids</taxon>
        <taxon>Brassicales</taxon>
        <taxon>Brassicaceae</taxon>
        <taxon>Camelineae</taxon>
        <taxon>Arabidopsis</taxon>
    </lineage>
</organism>
<reference key="1">
    <citation type="journal article" date="2010" name="J. Biol. Chem.">
        <title>Cloning of Glucuronokinase from Arabidopsis thaliana, the last missing enzyme of the myo-inositol oxygenase pathway to nucleotide sugars.</title>
        <authorList>
            <person name="Pieslinger A.M."/>
            <person name="Hoepflinger M.C."/>
            <person name="Tenhaken R."/>
        </authorList>
    </citation>
    <scope>NUCLEOTIDE SEQUENCE [MRNA]</scope>
    <scope>FUNCTION</scope>
    <scope>CATALYTIC ACTIVITY</scope>
    <scope>COFACTOR</scope>
    <scope>BIOPHYSICOCHEMICAL PROPERTIES</scope>
    <scope>TISSUE SPECIFICITY</scope>
</reference>
<reference key="2">
    <citation type="journal article" date="2000" name="Nature">
        <title>Sequence and analysis of chromosome 3 of the plant Arabidopsis thaliana.</title>
        <authorList>
            <person name="Salanoubat M."/>
            <person name="Lemcke K."/>
            <person name="Rieger M."/>
            <person name="Ansorge W."/>
            <person name="Unseld M."/>
            <person name="Fartmann B."/>
            <person name="Valle G."/>
            <person name="Bloecker H."/>
            <person name="Perez-Alonso M."/>
            <person name="Obermaier B."/>
            <person name="Delseny M."/>
            <person name="Boutry M."/>
            <person name="Grivell L.A."/>
            <person name="Mache R."/>
            <person name="Puigdomenech P."/>
            <person name="De Simone V."/>
            <person name="Choisne N."/>
            <person name="Artiguenave F."/>
            <person name="Robert C."/>
            <person name="Brottier P."/>
            <person name="Wincker P."/>
            <person name="Cattolico L."/>
            <person name="Weissenbach J."/>
            <person name="Saurin W."/>
            <person name="Quetier F."/>
            <person name="Schaefer M."/>
            <person name="Mueller-Auer S."/>
            <person name="Gabel C."/>
            <person name="Fuchs M."/>
            <person name="Benes V."/>
            <person name="Wurmbach E."/>
            <person name="Drzonek H."/>
            <person name="Erfle H."/>
            <person name="Jordan N."/>
            <person name="Bangert S."/>
            <person name="Wiedelmann R."/>
            <person name="Kranz H."/>
            <person name="Voss H."/>
            <person name="Holland R."/>
            <person name="Brandt P."/>
            <person name="Nyakatura G."/>
            <person name="Vezzi A."/>
            <person name="D'Angelo M."/>
            <person name="Pallavicini A."/>
            <person name="Toppo S."/>
            <person name="Simionati B."/>
            <person name="Conrad A."/>
            <person name="Hornischer K."/>
            <person name="Kauer G."/>
            <person name="Loehnert T.-H."/>
            <person name="Nordsiek G."/>
            <person name="Reichelt J."/>
            <person name="Scharfe M."/>
            <person name="Schoen O."/>
            <person name="Bargues M."/>
            <person name="Terol J."/>
            <person name="Climent J."/>
            <person name="Navarro P."/>
            <person name="Collado C."/>
            <person name="Perez-Perez A."/>
            <person name="Ottenwaelder B."/>
            <person name="Duchemin D."/>
            <person name="Cooke R."/>
            <person name="Laudie M."/>
            <person name="Berger-Llauro C."/>
            <person name="Purnelle B."/>
            <person name="Masuy D."/>
            <person name="de Haan M."/>
            <person name="Maarse A.C."/>
            <person name="Alcaraz J.-P."/>
            <person name="Cottet A."/>
            <person name="Casacuberta E."/>
            <person name="Monfort A."/>
            <person name="Argiriou A."/>
            <person name="Flores M."/>
            <person name="Liguori R."/>
            <person name="Vitale D."/>
            <person name="Mannhaupt G."/>
            <person name="Haase D."/>
            <person name="Schoof H."/>
            <person name="Rudd S."/>
            <person name="Zaccaria P."/>
            <person name="Mewes H.-W."/>
            <person name="Mayer K.F.X."/>
            <person name="Kaul S."/>
            <person name="Town C.D."/>
            <person name="Koo H.L."/>
            <person name="Tallon L.J."/>
            <person name="Jenkins J."/>
            <person name="Rooney T."/>
            <person name="Rizzo M."/>
            <person name="Walts A."/>
            <person name="Utterback T."/>
            <person name="Fujii C.Y."/>
            <person name="Shea T.P."/>
            <person name="Creasy T.H."/>
            <person name="Haas B."/>
            <person name="Maiti R."/>
            <person name="Wu D."/>
            <person name="Peterson J."/>
            <person name="Van Aken S."/>
            <person name="Pai G."/>
            <person name="Militscher J."/>
            <person name="Sellers P."/>
            <person name="Gill J.E."/>
            <person name="Feldblyum T.V."/>
            <person name="Preuss D."/>
            <person name="Lin X."/>
            <person name="Nierman W.C."/>
            <person name="Salzberg S.L."/>
            <person name="White O."/>
            <person name="Venter J.C."/>
            <person name="Fraser C.M."/>
            <person name="Kaneko T."/>
            <person name="Nakamura Y."/>
            <person name="Sato S."/>
            <person name="Kato T."/>
            <person name="Asamizu E."/>
            <person name="Sasamoto S."/>
            <person name="Kimura T."/>
            <person name="Idesawa K."/>
            <person name="Kawashima K."/>
            <person name="Kishida Y."/>
            <person name="Kiyokawa C."/>
            <person name="Kohara M."/>
            <person name="Matsumoto M."/>
            <person name="Matsuno A."/>
            <person name="Muraki A."/>
            <person name="Nakayama S."/>
            <person name="Nakazaki N."/>
            <person name="Shinpo S."/>
            <person name="Takeuchi C."/>
            <person name="Wada T."/>
            <person name="Watanabe A."/>
            <person name="Yamada M."/>
            <person name="Yasuda M."/>
            <person name="Tabata S."/>
        </authorList>
    </citation>
    <scope>NUCLEOTIDE SEQUENCE [LARGE SCALE GENOMIC DNA]</scope>
    <source>
        <strain>cv. Columbia</strain>
    </source>
</reference>
<reference key="3">
    <citation type="journal article" date="2017" name="Plant J.">
        <title>Araport11: a complete reannotation of the Arabidopsis thaliana reference genome.</title>
        <authorList>
            <person name="Cheng C.Y."/>
            <person name="Krishnakumar V."/>
            <person name="Chan A.P."/>
            <person name="Thibaud-Nissen F."/>
            <person name="Schobel S."/>
            <person name="Town C.D."/>
        </authorList>
    </citation>
    <scope>GENOME REANNOTATION</scope>
    <source>
        <strain>cv. Columbia</strain>
    </source>
</reference>
<reference key="4">
    <citation type="journal article" date="2003" name="Science">
        <title>Empirical analysis of transcriptional activity in the Arabidopsis genome.</title>
        <authorList>
            <person name="Yamada K."/>
            <person name="Lim J."/>
            <person name="Dale J.M."/>
            <person name="Chen H."/>
            <person name="Shinn P."/>
            <person name="Palm C.J."/>
            <person name="Southwick A.M."/>
            <person name="Wu H.C."/>
            <person name="Kim C.J."/>
            <person name="Nguyen M."/>
            <person name="Pham P.K."/>
            <person name="Cheuk R.F."/>
            <person name="Karlin-Newmann G."/>
            <person name="Liu S.X."/>
            <person name="Lam B."/>
            <person name="Sakano H."/>
            <person name="Wu T."/>
            <person name="Yu G."/>
            <person name="Miranda M."/>
            <person name="Quach H.L."/>
            <person name="Tripp M."/>
            <person name="Chang C.H."/>
            <person name="Lee J.M."/>
            <person name="Toriumi M.J."/>
            <person name="Chan M.M."/>
            <person name="Tang C.C."/>
            <person name="Onodera C.S."/>
            <person name="Deng J.M."/>
            <person name="Akiyama K."/>
            <person name="Ansari Y."/>
            <person name="Arakawa T."/>
            <person name="Banh J."/>
            <person name="Banno F."/>
            <person name="Bowser L."/>
            <person name="Brooks S.Y."/>
            <person name="Carninci P."/>
            <person name="Chao Q."/>
            <person name="Choy N."/>
            <person name="Enju A."/>
            <person name="Goldsmith A.D."/>
            <person name="Gurjal M."/>
            <person name="Hansen N.F."/>
            <person name="Hayashizaki Y."/>
            <person name="Johnson-Hopson C."/>
            <person name="Hsuan V.W."/>
            <person name="Iida K."/>
            <person name="Karnes M."/>
            <person name="Khan S."/>
            <person name="Koesema E."/>
            <person name="Ishida J."/>
            <person name="Jiang P.X."/>
            <person name="Jones T."/>
            <person name="Kawai J."/>
            <person name="Kamiya A."/>
            <person name="Meyers C."/>
            <person name="Nakajima M."/>
            <person name="Narusaka M."/>
            <person name="Seki M."/>
            <person name="Sakurai T."/>
            <person name="Satou M."/>
            <person name="Tamse R."/>
            <person name="Vaysberg M."/>
            <person name="Wallender E.K."/>
            <person name="Wong C."/>
            <person name="Yamamura Y."/>
            <person name="Yuan S."/>
            <person name="Shinozaki K."/>
            <person name="Davis R.W."/>
            <person name="Theologis A."/>
            <person name="Ecker J.R."/>
        </authorList>
    </citation>
    <scope>NUCLEOTIDE SEQUENCE [LARGE SCALE MRNA]</scope>
    <source>
        <strain>cv. Columbia</strain>
    </source>
</reference>